<comment type="function">
    <text evidence="1">Catalyzes the condensation of pantoate with beta-alanine in an ATP-dependent reaction via a pantoyl-adenylate intermediate.</text>
</comment>
<comment type="catalytic activity">
    <reaction evidence="1">
        <text>(R)-pantoate + beta-alanine + ATP = (R)-pantothenate + AMP + diphosphate + H(+)</text>
        <dbReference type="Rhea" id="RHEA:10912"/>
        <dbReference type="ChEBI" id="CHEBI:15378"/>
        <dbReference type="ChEBI" id="CHEBI:15980"/>
        <dbReference type="ChEBI" id="CHEBI:29032"/>
        <dbReference type="ChEBI" id="CHEBI:30616"/>
        <dbReference type="ChEBI" id="CHEBI:33019"/>
        <dbReference type="ChEBI" id="CHEBI:57966"/>
        <dbReference type="ChEBI" id="CHEBI:456215"/>
        <dbReference type="EC" id="6.3.2.1"/>
    </reaction>
</comment>
<comment type="pathway">
    <text evidence="1">Cofactor biosynthesis; (R)-pantothenate biosynthesis; (R)-pantothenate from (R)-pantoate and beta-alanine: step 1/1.</text>
</comment>
<comment type="subunit">
    <text evidence="1">Homodimer.</text>
</comment>
<comment type="subcellular location">
    <subcellularLocation>
        <location evidence="1">Cytoplasm</location>
    </subcellularLocation>
</comment>
<comment type="miscellaneous">
    <text evidence="1">The reaction proceeds by a bi uni uni bi ping pong mechanism.</text>
</comment>
<comment type="similarity">
    <text evidence="1">Belongs to the pantothenate synthetase family.</text>
</comment>
<name>PANC_HELPS</name>
<feature type="chain" id="PRO_1000097074" description="Pantothenate synthetase">
    <location>
        <begin position="1"/>
        <end position="276"/>
    </location>
</feature>
<feature type="active site" description="Proton donor" evidence="1">
    <location>
        <position position="34"/>
    </location>
</feature>
<feature type="binding site" evidence="1">
    <location>
        <begin position="27"/>
        <end position="34"/>
    </location>
    <ligand>
        <name>ATP</name>
        <dbReference type="ChEBI" id="CHEBI:30616"/>
    </ligand>
</feature>
<feature type="binding site" evidence="1">
    <location>
        <position position="58"/>
    </location>
    <ligand>
        <name>(R)-pantoate</name>
        <dbReference type="ChEBI" id="CHEBI:15980"/>
    </ligand>
</feature>
<feature type="binding site" evidence="1">
    <location>
        <position position="58"/>
    </location>
    <ligand>
        <name>beta-alanine</name>
        <dbReference type="ChEBI" id="CHEBI:57966"/>
    </ligand>
</feature>
<feature type="binding site" evidence="1">
    <location>
        <begin position="147"/>
        <end position="150"/>
    </location>
    <ligand>
        <name>ATP</name>
        <dbReference type="ChEBI" id="CHEBI:30616"/>
    </ligand>
</feature>
<feature type="binding site" evidence="1">
    <location>
        <position position="153"/>
    </location>
    <ligand>
        <name>(R)-pantoate</name>
        <dbReference type="ChEBI" id="CHEBI:15980"/>
    </ligand>
</feature>
<feature type="binding site" evidence="1">
    <location>
        <position position="176"/>
    </location>
    <ligand>
        <name>ATP</name>
        <dbReference type="ChEBI" id="CHEBI:30616"/>
    </ligand>
</feature>
<feature type="binding site" evidence="1">
    <location>
        <begin position="184"/>
        <end position="187"/>
    </location>
    <ligand>
        <name>ATP</name>
        <dbReference type="ChEBI" id="CHEBI:30616"/>
    </ligand>
</feature>
<evidence type="ECO:0000255" key="1">
    <source>
        <dbReference type="HAMAP-Rule" id="MF_00158"/>
    </source>
</evidence>
<accession>B2UW10</accession>
<gene>
    <name evidence="1" type="primary">panC</name>
    <name type="ordered locus">HPSH_00030</name>
</gene>
<organism>
    <name type="scientific">Helicobacter pylori (strain Shi470)</name>
    <dbReference type="NCBI Taxonomy" id="512562"/>
    <lineage>
        <taxon>Bacteria</taxon>
        <taxon>Pseudomonadati</taxon>
        <taxon>Campylobacterota</taxon>
        <taxon>Epsilonproteobacteria</taxon>
        <taxon>Campylobacterales</taxon>
        <taxon>Helicobacteraceae</taxon>
        <taxon>Helicobacter</taxon>
    </lineage>
</organism>
<reference key="1">
    <citation type="submission" date="2008-05" db="EMBL/GenBank/DDBJ databases">
        <title>Genome sequence of Helicobacter pylori from the remote Amazon: traces of Asian ancestry of the first Americans.</title>
        <authorList>
            <person name="Kersulyte D."/>
            <person name="Kalia A."/>
            <person name="Gilman R.H."/>
            <person name="Berg D.E."/>
        </authorList>
    </citation>
    <scope>NUCLEOTIDE SEQUENCE [LARGE SCALE GENOMIC DNA]</scope>
    <source>
        <strain>Shi470</strain>
    </source>
</reference>
<dbReference type="EC" id="6.3.2.1" evidence="1"/>
<dbReference type="EMBL" id="CP001072">
    <property type="protein sequence ID" value="ACD47475.1"/>
    <property type="molecule type" value="Genomic_DNA"/>
</dbReference>
<dbReference type="RefSeq" id="WP_001201966.1">
    <property type="nucleotide sequence ID" value="NC_010698.2"/>
</dbReference>
<dbReference type="SMR" id="B2UW10"/>
<dbReference type="KEGG" id="hps:HPSH_00030"/>
<dbReference type="HOGENOM" id="CLU_047148_0_0_7"/>
<dbReference type="UniPathway" id="UPA00028">
    <property type="reaction ID" value="UER00005"/>
</dbReference>
<dbReference type="GO" id="GO:0005829">
    <property type="term" value="C:cytosol"/>
    <property type="evidence" value="ECO:0007669"/>
    <property type="project" value="TreeGrafter"/>
</dbReference>
<dbReference type="GO" id="GO:0005524">
    <property type="term" value="F:ATP binding"/>
    <property type="evidence" value="ECO:0007669"/>
    <property type="project" value="UniProtKB-KW"/>
</dbReference>
<dbReference type="GO" id="GO:0004592">
    <property type="term" value="F:pantoate-beta-alanine ligase activity"/>
    <property type="evidence" value="ECO:0007669"/>
    <property type="project" value="UniProtKB-UniRule"/>
</dbReference>
<dbReference type="GO" id="GO:0015940">
    <property type="term" value="P:pantothenate biosynthetic process"/>
    <property type="evidence" value="ECO:0007669"/>
    <property type="project" value="UniProtKB-UniRule"/>
</dbReference>
<dbReference type="CDD" id="cd00560">
    <property type="entry name" value="PanC"/>
    <property type="match status" value="1"/>
</dbReference>
<dbReference type="FunFam" id="3.40.50.620:FF:000114">
    <property type="entry name" value="Pantothenate synthetase"/>
    <property type="match status" value="1"/>
</dbReference>
<dbReference type="Gene3D" id="3.40.50.620">
    <property type="entry name" value="HUPs"/>
    <property type="match status" value="1"/>
</dbReference>
<dbReference type="Gene3D" id="3.30.1300.10">
    <property type="entry name" value="Pantoate-beta-alanine ligase, C-terminal domain"/>
    <property type="match status" value="1"/>
</dbReference>
<dbReference type="HAMAP" id="MF_00158">
    <property type="entry name" value="PanC"/>
    <property type="match status" value="1"/>
</dbReference>
<dbReference type="InterPro" id="IPR004821">
    <property type="entry name" value="Cyt_trans-like"/>
</dbReference>
<dbReference type="InterPro" id="IPR003721">
    <property type="entry name" value="Pantoate_ligase"/>
</dbReference>
<dbReference type="InterPro" id="IPR042176">
    <property type="entry name" value="Pantoate_ligase_C"/>
</dbReference>
<dbReference type="InterPro" id="IPR014729">
    <property type="entry name" value="Rossmann-like_a/b/a_fold"/>
</dbReference>
<dbReference type="NCBIfam" id="TIGR00125">
    <property type="entry name" value="cyt_tran_rel"/>
    <property type="match status" value="1"/>
</dbReference>
<dbReference type="NCBIfam" id="TIGR00018">
    <property type="entry name" value="panC"/>
    <property type="match status" value="1"/>
</dbReference>
<dbReference type="PANTHER" id="PTHR21299">
    <property type="entry name" value="CYTIDYLATE KINASE/PANTOATE-BETA-ALANINE LIGASE"/>
    <property type="match status" value="1"/>
</dbReference>
<dbReference type="PANTHER" id="PTHR21299:SF1">
    <property type="entry name" value="PANTOATE--BETA-ALANINE LIGASE"/>
    <property type="match status" value="1"/>
</dbReference>
<dbReference type="Pfam" id="PF02569">
    <property type="entry name" value="Pantoate_ligase"/>
    <property type="match status" value="1"/>
</dbReference>
<dbReference type="SUPFAM" id="SSF52374">
    <property type="entry name" value="Nucleotidylyl transferase"/>
    <property type="match status" value="1"/>
</dbReference>
<sequence length="276" mass="31161">MRALETIATLREYRKSLKESVGFVPTMGALHKGHQSLIERSLKENSHTIVSVFVNPTQFGANEDFSAYPRPLEKDLALCEGLGVNAVFVPKTSEMYPYEIEKRLKLYAPTFLSHSLEGAMREGHFDGVVQVVLRLFHLVNPTRAYFGKKDAQQLLIIQHLVQDLLLDIEIAPCEIVRDSDNLALSSRNVYLNATQRKQALAIPKALENIKQAIDKGEKACEKLKKLGLKILETLEVDYLEFCNHKLEPLKTIEPTNTLVLVAARVGKTRLLDNLWV</sequence>
<keyword id="KW-0067">ATP-binding</keyword>
<keyword id="KW-0963">Cytoplasm</keyword>
<keyword id="KW-0436">Ligase</keyword>
<keyword id="KW-0547">Nucleotide-binding</keyword>
<keyword id="KW-0566">Pantothenate biosynthesis</keyword>
<proteinExistence type="inferred from homology"/>
<protein>
    <recommendedName>
        <fullName evidence="1">Pantothenate synthetase</fullName>
        <shortName evidence="1">PS</shortName>
        <ecNumber evidence="1">6.3.2.1</ecNumber>
    </recommendedName>
    <alternativeName>
        <fullName evidence="1">Pantoate--beta-alanine ligase</fullName>
    </alternativeName>
    <alternativeName>
        <fullName evidence="1">Pantoate-activating enzyme</fullName>
    </alternativeName>
</protein>